<name>ACYP_ECOLI</name>
<proteinExistence type="evidence at protein level"/>
<comment type="catalytic activity">
    <reaction evidence="1 2">
        <text>an acyl phosphate + H2O = a carboxylate + phosphate + H(+)</text>
        <dbReference type="Rhea" id="RHEA:14965"/>
        <dbReference type="ChEBI" id="CHEBI:15377"/>
        <dbReference type="ChEBI" id="CHEBI:15378"/>
        <dbReference type="ChEBI" id="CHEBI:29067"/>
        <dbReference type="ChEBI" id="CHEBI:43474"/>
        <dbReference type="ChEBI" id="CHEBI:59918"/>
        <dbReference type="EC" id="3.6.1.7"/>
    </reaction>
</comment>
<comment type="biophysicochemical properties">
    <kinetics>
        <KM evidence="2">0.54 mM for benzoylphosphate</KM>
    </kinetics>
    <phDependence>
        <text evidence="2">Optimum pH is 5.2-6.5.</text>
    </phDependence>
    <temperatureDependence>
        <text evidence="2">Thermostable. Retains 85-90 % of its activity after 3 hours of incubation at 90 degrees Celsius.</text>
    </temperatureDependence>
</comment>
<comment type="miscellaneous">
    <text evidence="2">Has a considerably reduced catalytic efficiency compared to other mesophilic acylphosphatases. Shows a considerable resistance against urea denaturation since the full enzymatic activity is maintained in the presence of urea concentrations approaching 6.0 M and that only a slight decreae of 10-15 % was observed with higher urea concentrations.</text>
</comment>
<comment type="similarity">
    <text evidence="1">Belongs to the acylphosphatase family.</text>
</comment>
<gene>
    <name evidence="1" type="primary">yccX</name>
    <name type="ordered locus">b0968</name>
    <name type="ordered locus">JW5131</name>
</gene>
<feature type="chain" id="PRO_0000158553" description="Acylphosphatase">
    <location>
        <begin position="1"/>
        <end position="92"/>
    </location>
</feature>
<feature type="domain" description="Acylphosphatase-like" evidence="1">
    <location>
        <begin position="5"/>
        <end position="92"/>
    </location>
</feature>
<feature type="active site" evidence="1">
    <location>
        <position position="20"/>
    </location>
</feature>
<feature type="active site" evidence="1">
    <location>
        <position position="38"/>
    </location>
</feature>
<feature type="disulfide bond" evidence="1 2">
    <location>
        <begin position="5"/>
        <end position="49"/>
    </location>
</feature>
<feature type="mutagenesis site" description="No change in secondary structure. Nearly identical enzymatic properties. Loss of activity in 8.0 M urea. Reduced thermodynamic activity. Inactivated after 3 hours of incubation at 90 degrees Celsius." evidence="2">
    <original>C</original>
    <variation>A</variation>
    <location>
        <position position="5"/>
    </location>
</feature>
<feature type="strand" evidence="7">
    <location>
        <begin position="3"/>
        <end position="13"/>
    </location>
</feature>
<feature type="strand" evidence="7">
    <location>
        <begin position="15"/>
        <end position="18"/>
    </location>
</feature>
<feature type="helix" evidence="7">
    <location>
        <begin position="19"/>
        <end position="29"/>
    </location>
</feature>
<feature type="strand" evidence="7">
    <location>
        <begin position="33"/>
        <end position="38"/>
    </location>
</feature>
<feature type="strand" evidence="6">
    <location>
        <begin position="40"/>
        <end position="42"/>
    </location>
</feature>
<feature type="strand" evidence="7">
    <location>
        <begin position="44"/>
        <end position="51"/>
    </location>
</feature>
<feature type="helix" evidence="7">
    <location>
        <begin position="52"/>
        <end position="63"/>
    </location>
</feature>
<feature type="strand" evidence="7">
    <location>
        <begin position="71"/>
        <end position="81"/>
    </location>
</feature>
<feature type="helix" evidence="7">
    <location>
        <begin position="82"/>
        <end position="85"/>
    </location>
</feature>
<feature type="strand" evidence="7">
    <location>
        <begin position="86"/>
        <end position="89"/>
    </location>
</feature>
<sequence>MSKVCIIAWVYGRVQGVGFRYTTQYEAKRLGLTGYAKNLDDGSVEVVACGEEGQVEKLMQWLKSGGPRSARVERVLSEPHHPSGELTDFRIR</sequence>
<reference key="1">
    <citation type="journal article" date="1996" name="DNA Res.">
        <title>A 718-kb DNA sequence of the Escherichia coli K-12 genome corresponding to the 12.7-28.0 min region on the linkage map.</title>
        <authorList>
            <person name="Oshima T."/>
            <person name="Aiba H."/>
            <person name="Baba T."/>
            <person name="Fujita K."/>
            <person name="Hayashi K."/>
            <person name="Honjo A."/>
            <person name="Ikemoto K."/>
            <person name="Inada T."/>
            <person name="Itoh T."/>
            <person name="Kajihara M."/>
            <person name="Kanai K."/>
            <person name="Kashimoto K."/>
            <person name="Kimura S."/>
            <person name="Kitagawa M."/>
            <person name="Makino K."/>
            <person name="Masuda S."/>
            <person name="Miki T."/>
            <person name="Mizobuchi K."/>
            <person name="Mori H."/>
            <person name="Motomura K."/>
            <person name="Nakamura Y."/>
            <person name="Nashimoto H."/>
            <person name="Nishio Y."/>
            <person name="Saito N."/>
            <person name="Sampei G."/>
            <person name="Seki Y."/>
            <person name="Tagami H."/>
            <person name="Takemoto K."/>
            <person name="Wada C."/>
            <person name="Yamamoto Y."/>
            <person name="Yano M."/>
            <person name="Horiuchi T."/>
        </authorList>
    </citation>
    <scope>NUCLEOTIDE SEQUENCE [LARGE SCALE GENOMIC DNA]</scope>
    <source>
        <strain>K12 / W3110 / ATCC 27325 / DSM 5911</strain>
    </source>
</reference>
<reference key="2">
    <citation type="journal article" date="1997" name="Science">
        <title>The complete genome sequence of Escherichia coli K-12.</title>
        <authorList>
            <person name="Blattner F.R."/>
            <person name="Plunkett G. III"/>
            <person name="Bloch C.A."/>
            <person name="Perna N.T."/>
            <person name="Burland V."/>
            <person name="Riley M."/>
            <person name="Collado-Vides J."/>
            <person name="Glasner J.D."/>
            <person name="Rode C.K."/>
            <person name="Mayhew G.F."/>
            <person name="Gregor J."/>
            <person name="Davis N.W."/>
            <person name="Kirkpatrick H.A."/>
            <person name="Goeden M.A."/>
            <person name="Rose D.J."/>
            <person name="Mau B."/>
            <person name="Shao Y."/>
        </authorList>
    </citation>
    <scope>NUCLEOTIDE SEQUENCE [LARGE SCALE GENOMIC DNA]</scope>
    <source>
        <strain>K12 / MG1655 / ATCC 47076</strain>
    </source>
</reference>
<reference key="3">
    <citation type="journal article" date="2006" name="Mol. Syst. Biol.">
        <title>Highly accurate genome sequences of Escherichia coli K-12 strains MG1655 and W3110.</title>
        <authorList>
            <person name="Hayashi K."/>
            <person name="Morooka N."/>
            <person name="Yamamoto Y."/>
            <person name="Fujita K."/>
            <person name="Isono K."/>
            <person name="Choi S."/>
            <person name="Ohtsubo E."/>
            <person name="Baba T."/>
            <person name="Wanner B.L."/>
            <person name="Mori H."/>
            <person name="Horiuchi T."/>
        </authorList>
    </citation>
    <scope>NUCLEOTIDE SEQUENCE [LARGE SCALE GENOMIC DNA]</scope>
    <source>
        <strain>K12 / W3110 / ATCC 27325 / DSM 5911</strain>
    </source>
</reference>
<reference key="4">
    <citation type="journal article" date="2006" name="FEBS Lett.">
        <title>The intrachain disulfide bridge is responsible of the unusual stability properties of novel acylphosphatase from Escherichia coli.</title>
        <authorList>
            <person name="Ramazzotti M."/>
            <person name="Parrini C."/>
            <person name="Stefani M."/>
            <person name="Manao G."/>
            <person name="Degl'Innocenti D."/>
        </authorList>
    </citation>
    <scope>FUNCTION</scope>
    <scope>CATALYTIC ACTIVITY</scope>
    <scope>IDENTIFICATION BY MASS SPECTROMETRY</scope>
    <scope>DISULFIDE BOND</scope>
    <scope>BIOPHYSICOCHEMICAL PROPERTIES</scope>
    <scope>MUTAGENESIS OF CYS-5</scope>
    <source>
        <strain>K12 / DH5-alpha</strain>
    </source>
</reference>
<reference key="5">
    <citation type="journal article" date="2006" name="J. Biomol. NMR">
        <title>NMR solution structure of the acylphosphatase from Escherichia coli.</title>
        <authorList>
            <person name="Pagano K."/>
            <person name="Ramazzotti M."/>
            <person name="Viglino P."/>
            <person name="Esposito G."/>
            <person name="Degl'Innocenti D."/>
            <person name="Taddei N."/>
            <person name="Corazza A."/>
        </authorList>
    </citation>
    <scope>STRUCTURE BY NMR</scope>
</reference>
<protein>
    <recommendedName>
        <fullName evidence="1 3 4">Acylphosphatase</fullName>
        <ecNumber evidence="1 2">3.6.1.7</ecNumber>
    </recommendedName>
    <alternativeName>
        <fullName evidence="1 5">Acylphosphate phosphohydrolase</fullName>
    </alternativeName>
</protein>
<organism>
    <name type="scientific">Escherichia coli (strain K12)</name>
    <dbReference type="NCBI Taxonomy" id="83333"/>
    <lineage>
        <taxon>Bacteria</taxon>
        <taxon>Pseudomonadati</taxon>
        <taxon>Pseudomonadota</taxon>
        <taxon>Gammaproteobacteria</taxon>
        <taxon>Enterobacterales</taxon>
        <taxon>Enterobacteriaceae</taxon>
        <taxon>Escherichia</taxon>
    </lineage>
</organism>
<dbReference type="EC" id="3.6.1.7" evidence="1 2"/>
<dbReference type="EMBL" id="U00096">
    <property type="protein sequence ID" value="AAC74054.1"/>
    <property type="molecule type" value="Genomic_DNA"/>
</dbReference>
<dbReference type="EMBL" id="AP009048">
    <property type="protein sequence ID" value="BAA35733.2"/>
    <property type="molecule type" value="Genomic_DNA"/>
</dbReference>
<dbReference type="PIR" id="G64837">
    <property type="entry name" value="G64837"/>
</dbReference>
<dbReference type="RefSeq" id="NP_415488.1">
    <property type="nucleotide sequence ID" value="NC_000913.3"/>
</dbReference>
<dbReference type="RefSeq" id="WP_000048252.1">
    <property type="nucleotide sequence ID" value="NZ_SSZK01000002.1"/>
</dbReference>
<dbReference type="PDB" id="2GV1">
    <property type="method" value="NMR"/>
    <property type="chains" value="A=1-92"/>
</dbReference>
<dbReference type="PDB" id="8BV9">
    <property type="method" value="X-ray"/>
    <property type="resolution" value="2.55 A"/>
    <property type="chains" value="A=1-92"/>
</dbReference>
<dbReference type="PDBsum" id="2GV1"/>
<dbReference type="PDBsum" id="8BV9"/>
<dbReference type="BMRB" id="P0AB65"/>
<dbReference type="SMR" id="P0AB65"/>
<dbReference type="BioGRID" id="4260041">
    <property type="interactions" value="15"/>
</dbReference>
<dbReference type="BioGRID" id="849681">
    <property type="interactions" value="3"/>
</dbReference>
<dbReference type="DIP" id="DIP-11502N"/>
<dbReference type="FunCoup" id="P0AB65">
    <property type="interactions" value="576"/>
</dbReference>
<dbReference type="IntAct" id="P0AB65">
    <property type="interactions" value="4"/>
</dbReference>
<dbReference type="STRING" id="511145.b0968"/>
<dbReference type="jPOST" id="P0AB65"/>
<dbReference type="PaxDb" id="511145-b0968"/>
<dbReference type="EnsemblBacteria" id="AAC74054">
    <property type="protein sequence ID" value="AAC74054"/>
    <property type="gene ID" value="b0968"/>
</dbReference>
<dbReference type="GeneID" id="93776446"/>
<dbReference type="GeneID" id="945304"/>
<dbReference type="KEGG" id="ecj:JW5131"/>
<dbReference type="KEGG" id="eco:b0968"/>
<dbReference type="KEGG" id="ecoc:C3026_05915"/>
<dbReference type="PATRIC" id="fig|1411691.4.peg.1305"/>
<dbReference type="EchoBASE" id="EB3490"/>
<dbReference type="eggNOG" id="COG1254">
    <property type="taxonomic scope" value="Bacteria"/>
</dbReference>
<dbReference type="HOGENOM" id="CLU_141932_1_2_6"/>
<dbReference type="InParanoid" id="P0AB65"/>
<dbReference type="OMA" id="VGFRWSM"/>
<dbReference type="OrthoDB" id="5295388at2"/>
<dbReference type="PhylomeDB" id="P0AB65"/>
<dbReference type="BioCyc" id="EcoCyc:G6502-MONOMER"/>
<dbReference type="BioCyc" id="MetaCyc:G6502-MONOMER"/>
<dbReference type="BRENDA" id="3.6.1.7">
    <property type="organism ID" value="2026"/>
</dbReference>
<dbReference type="SABIO-RK" id="P0AB65"/>
<dbReference type="EvolutionaryTrace" id="P0AB65"/>
<dbReference type="PRO" id="PR:P0AB65"/>
<dbReference type="Proteomes" id="UP000000625">
    <property type="component" value="Chromosome"/>
</dbReference>
<dbReference type="GO" id="GO:0003998">
    <property type="term" value="F:acylphosphatase activity"/>
    <property type="evidence" value="ECO:0000314"/>
    <property type="project" value="EcoCyc"/>
</dbReference>
<dbReference type="GO" id="GO:0009408">
    <property type="term" value="P:response to heat"/>
    <property type="evidence" value="ECO:0000315"/>
    <property type="project" value="EcoCyc"/>
</dbReference>
<dbReference type="FunFam" id="3.30.70.100:FF:000012">
    <property type="entry name" value="Acylphosphatase"/>
    <property type="match status" value="1"/>
</dbReference>
<dbReference type="Gene3D" id="3.30.70.100">
    <property type="match status" value="1"/>
</dbReference>
<dbReference type="HAMAP" id="MF_01450">
    <property type="entry name" value="Acylphosphatase_entero"/>
    <property type="match status" value="1"/>
</dbReference>
<dbReference type="InterPro" id="IPR020456">
    <property type="entry name" value="Acylphosphatase"/>
</dbReference>
<dbReference type="InterPro" id="IPR001792">
    <property type="entry name" value="Acylphosphatase-like_dom"/>
</dbReference>
<dbReference type="InterPro" id="IPR036046">
    <property type="entry name" value="Acylphosphatase-like_dom_sf"/>
</dbReference>
<dbReference type="InterPro" id="IPR028627">
    <property type="entry name" value="Acylphosphatase_bac"/>
</dbReference>
<dbReference type="InterPro" id="IPR017968">
    <property type="entry name" value="Acylphosphatase_CS"/>
</dbReference>
<dbReference type="NCBIfam" id="NF011000">
    <property type="entry name" value="PRK14426.1"/>
    <property type="match status" value="1"/>
</dbReference>
<dbReference type="PANTHER" id="PTHR47268">
    <property type="entry name" value="ACYLPHOSPHATASE"/>
    <property type="match status" value="1"/>
</dbReference>
<dbReference type="PANTHER" id="PTHR47268:SF4">
    <property type="entry name" value="ACYLPHOSPHATASE"/>
    <property type="match status" value="1"/>
</dbReference>
<dbReference type="Pfam" id="PF00708">
    <property type="entry name" value="Acylphosphatase"/>
    <property type="match status" value="1"/>
</dbReference>
<dbReference type="PRINTS" id="PR00112">
    <property type="entry name" value="ACYLPHPHTASE"/>
</dbReference>
<dbReference type="SUPFAM" id="SSF54975">
    <property type="entry name" value="Acylphosphatase/BLUF domain-like"/>
    <property type="match status" value="1"/>
</dbReference>
<dbReference type="PROSITE" id="PS00150">
    <property type="entry name" value="ACYLPHOSPHATASE_1"/>
    <property type="match status" value="1"/>
</dbReference>
<dbReference type="PROSITE" id="PS00151">
    <property type="entry name" value="ACYLPHOSPHATASE_2"/>
    <property type="match status" value="1"/>
</dbReference>
<dbReference type="PROSITE" id="PS51160">
    <property type="entry name" value="ACYLPHOSPHATASE_3"/>
    <property type="match status" value="1"/>
</dbReference>
<keyword id="KW-0002">3D-structure</keyword>
<keyword id="KW-1015">Disulfide bond</keyword>
<keyword id="KW-0378">Hydrolase</keyword>
<keyword id="KW-1185">Reference proteome</keyword>
<accession>P0AB65</accession>
<accession>P75877</accession>
<accession>Q9R7Q1</accession>
<evidence type="ECO:0000255" key="1">
    <source>
        <dbReference type="HAMAP-Rule" id="MF_01450"/>
    </source>
</evidence>
<evidence type="ECO:0000269" key="2">
    <source>
    </source>
</evidence>
<evidence type="ECO:0000303" key="3">
    <source>
    </source>
</evidence>
<evidence type="ECO:0000303" key="4">
    <source>
    </source>
</evidence>
<evidence type="ECO:0000305" key="5"/>
<evidence type="ECO:0007829" key="6">
    <source>
        <dbReference type="PDB" id="2GV1"/>
    </source>
</evidence>
<evidence type="ECO:0007829" key="7">
    <source>
        <dbReference type="PDB" id="8BV9"/>
    </source>
</evidence>